<reference key="1">
    <citation type="submission" date="1996-08" db="EMBL/GenBank/DDBJ databases">
        <title>Functional synapses that are partially depleted of vesicles in C. elegans rab-3 mutants.</title>
        <authorList>
            <person name="Nonet M.L."/>
            <person name="Staunton J.E."/>
            <person name="Kilgard M.P."/>
            <person name="Fergestad T."/>
            <person name="Jorgensen E."/>
            <person name="Hartweig E."/>
            <person name="Horvitz H.R."/>
            <person name="Meyer B.J."/>
        </authorList>
    </citation>
    <scope>NUCLEOTIDE SEQUENCE [MRNA]</scope>
</reference>
<reference key="2">
    <citation type="journal article" date="2004" name="J. Biol. Chem.">
        <title>Rabphilin and Noc2 are recruited to dense-core vesicles through specific interaction with Rab27A in PC12 cells.</title>
        <authorList>
            <person name="Fukuda M."/>
            <person name="Kanno E."/>
            <person name="Yamamoto A."/>
        </authorList>
    </citation>
    <scope>NUCLEOTIDE SEQUENCE [MRNA]</scope>
</reference>
<reference key="3">
    <citation type="journal article" date="1998" name="Science">
        <title>Genome sequence of the nematode C. elegans: a platform for investigating biology.</title>
        <authorList>
            <consortium name="The C. elegans sequencing consortium"/>
        </authorList>
    </citation>
    <scope>NUCLEOTIDE SEQUENCE [LARGE SCALE GENOMIC DNA]</scope>
    <source>
        <strain>Bristol N2</strain>
    </source>
</reference>
<reference key="4">
    <citation type="journal article" date="2010" name="Cell">
        <title>Endophilin functions as a membrane-bending molecule and is delivered to endocytic zones by exocytosis.</title>
        <authorList>
            <person name="Bai J."/>
            <person name="Hu Z."/>
            <person name="Dittman J.S."/>
            <person name="Pym E.C."/>
            <person name="Kaplan J.M."/>
        </authorList>
    </citation>
    <scope>FUNCTION</scope>
    <scope>MUTAGENESIS OF THR-36 AND GLN-81</scope>
</reference>
<reference key="5">
    <citation type="journal article" date="2016" name="Genetics">
        <title>Pioneer Axon Navigation Is Controlled by AEX-3, a Guanine Nucleotide Exchange Factor for RAB-3 in Caenorhabditis elegans.</title>
        <authorList>
            <person name="Bhat J.M."/>
            <person name="Hutter H."/>
        </authorList>
    </citation>
    <scope>FUNCTION</scope>
    <scope>MUTAGENESIS OF 76-TRP--CYS-219</scope>
</reference>
<sequence length="219" mass="24760">MAAGGQPQGATPGQPDQNFDYMFKLLIIGNSSVGKTSFLFRYCDDSFTSAFVSTVGIDFKVKTVFRGDKRVKLQIWDTAGQERYRTITTAYYRGAMGFILMYDITNEESFNSVQDWCTQIKTYSWENAQVVLVGNKCDMDSERVVSMDRGRQLADQLGLEFFETSAKENINVKAVFEKLVEIICDKMAESLDKDPQQQPKGQKLEANPTQKPAQQQCNC</sequence>
<feature type="chain" id="PRO_0000121091" description="Ras-related protein Rab-3">
    <location>
        <begin position="1"/>
        <end position="219"/>
    </location>
</feature>
<feature type="region of interest" description="Disordered" evidence="5">
    <location>
        <begin position="191"/>
        <end position="219"/>
    </location>
</feature>
<feature type="short sequence motif" description="Effector region" evidence="1">
    <location>
        <begin position="51"/>
        <end position="59"/>
    </location>
</feature>
<feature type="compositionally biased region" description="Polar residues" evidence="5">
    <location>
        <begin position="207"/>
        <end position="219"/>
    </location>
</feature>
<feature type="binding site" evidence="2">
    <location>
        <begin position="29"/>
        <end position="37"/>
    </location>
    <ligand>
        <name>GTP</name>
        <dbReference type="ChEBI" id="CHEBI:37565"/>
    </ligand>
</feature>
<feature type="binding site" evidence="4">
    <location>
        <begin position="48"/>
        <end position="54"/>
    </location>
    <ligand>
        <name>GTP</name>
        <dbReference type="ChEBI" id="CHEBI:37565"/>
    </ligand>
</feature>
<feature type="binding site" evidence="3">
    <location>
        <begin position="77"/>
        <end position="81"/>
    </location>
    <ligand>
        <name>GTP</name>
        <dbReference type="ChEBI" id="CHEBI:37565"/>
    </ligand>
</feature>
<feature type="binding site" evidence="2">
    <location>
        <begin position="135"/>
        <end position="138"/>
    </location>
    <ligand>
        <name>GTP</name>
        <dbReference type="ChEBI" id="CHEBI:37565"/>
    </ligand>
</feature>
<feature type="binding site" evidence="2">
    <location>
        <begin position="165"/>
        <end position="167"/>
    </location>
    <ligand>
        <name>GTP</name>
        <dbReference type="ChEBI" id="CHEBI:37565"/>
    </ligand>
</feature>
<feature type="modified residue" description="Cysteine methyl ester" evidence="1">
    <location>
        <position position="219"/>
    </location>
</feature>
<feature type="lipid moiety-binding region" description="S-geranylgeranyl cysteine" evidence="1">
    <location>
        <position position="217"/>
    </location>
</feature>
<feature type="lipid moiety-binding region" description="S-geranylgeranyl cysteine" evidence="1">
    <location>
        <position position="219"/>
    </location>
</feature>
<feature type="mutagenesis site" description="Probably constitutively inactive (GDP-locked form). Fails to prevent unc-57 enrichment to synaptic vesicles in an unc-13 mutant background." evidence="8">
    <original>T</original>
    <variation>N</variation>
    <location>
        <position position="36"/>
    </location>
</feature>
<feature type="mutagenesis site" description="In js49; abnormal cross-over of the AVG neuron axon during the formation of the right axon tract of the ventral nerve cord in 10 percent of mutants. In a nid-1 (cg119) mutant background, approximately 40 percent of mutants have impaired AVG axon navigation." evidence="7">
    <location>
        <begin position="76"/>
        <end position="219"/>
    </location>
</feature>
<feature type="mutagenesis site" description="Probably constitutively active (GTP-locked form). Reduced unc-57 enrichment to synaptic vesicles in an unc-13 mutant background." evidence="8">
    <original>Q</original>
    <variation>L</variation>
    <location>
        <position position="81"/>
    </location>
</feature>
<keyword id="KW-1003">Cell membrane</keyword>
<keyword id="KW-0268">Exocytosis</keyword>
<keyword id="KW-0342">GTP-binding</keyword>
<keyword id="KW-0449">Lipoprotein</keyword>
<keyword id="KW-0472">Membrane</keyword>
<keyword id="KW-0488">Methylation</keyword>
<keyword id="KW-0547">Nucleotide-binding</keyword>
<keyword id="KW-0636">Prenylation</keyword>
<keyword id="KW-0653">Protein transport</keyword>
<keyword id="KW-1185">Reference proteome</keyword>
<keyword id="KW-0813">Transport</keyword>
<organism>
    <name type="scientific">Caenorhabditis elegans</name>
    <dbReference type="NCBI Taxonomy" id="6239"/>
    <lineage>
        <taxon>Eukaryota</taxon>
        <taxon>Metazoa</taxon>
        <taxon>Ecdysozoa</taxon>
        <taxon>Nematoda</taxon>
        <taxon>Chromadorea</taxon>
        <taxon>Rhabditida</taxon>
        <taxon>Rhabditina</taxon>
        <taxon>Rhabditomorpha</taxon>
        <taxon>Rhabditoidea</taxon>
        <taxon>Rhabditidae</taxon>
        <taxon>Peloderinae</taxon>
        <taxon>Caenorhabditis</taxon>
    </lineage>
</organism>
<gene>
    <name type="primary">rab-3</name>
    <name type="ORF">C18A3.6</name>
</gene>
<protein>
    <recommendedName>
        <fullName>Ras-related protein Rab-3</fullName>
    </recommendedName>
</protein>
<evidence type="ECO:0000250" key="1"/>
<evidence type="ECO:0000250" key="2">
    <source>
        <dbReference type="UniProtKB" id="O95716"/>
    </source>
</evidence>
<evidence type="ECO:0000250" key="3">
    <source>
        <dbReference type="UniProtKB" id="P62820"/>
    </source>
</evidence>
<evidence type="ECO:0000250" key="4">
    <source>
        <dbReference type="UniProtKB" id="P63012"/>
    </source>
</evidence>
<evidence type="ECO:0000256" key="5">
    <source>
        <dbReference type="SAM" id="MobiDB-lite"/>
    </source>
</evidence>
<evidence type="ECO:0000269" key="6">
    <source>
    </source>
</evidence>
<evidence type="ECO:0000269" key="7">
    <source>
    </source>
</evidence>
<evidence type="ECO:0000269" key="8">
    <source>
    </source>
</evidence>
<evidence type="ECO:0000305" key="9"/>
<proteinExistence type="evidence at protein level"/>
<comment type="function">
    <text evidence="1 6 7">Involved in exocytosis by regulating a late step in synaptic vesicle fusion. Could play a role in neurotransmitter release by regulating membrane flow in the nerve terminal (By similarity). Plays a role in the recruitment of endophilin unc-57 to synaptic vesicles (PubMed:21029864). Probably by controlling dense-core vesicle trafficking, plays a role in the AVG neuron-mediated formation of the right axon tract of the ventral nerve cord (PubMed:27116976).</text>
</comment>
<comment type="subcellular location">
    <subcellularLocation>
        <location evidence="9">Cell membrane</location>
        <topology evidence="9">Lipid-anchor</topology>
        <orientation evidence="9">Cytoplasmic side</orientation>
    </subcellularLocation>
</comment>
<comment type="similarity">
    <text evidence="9">Belongs to the small GTPase superfamily. Rab family.</text>
</comment>
<dbReference type="EMBL" id="U68265">
    <property type="protein sequence ID" value="AAB16980.1"/>
    <property type="molecule type" value="mRNA"/>
</dbReference>
<dbReference type="EMBL" id="U68266">
    <property type="protein sequence ID" value="AAB16981.1"/>
    <property type="molecule type" value="mRNA"/>
</dbReference>
<dbReference type="EMBL" id="AB112928">
    <property type="protein sequence ID" value="BAD07033.1"/>
    <property type="molecule type" value="mRNA"/>
</dbReference>
<dbReference type="EMBL" id="FO080599">
    <property type="protein sequence ID" value="CCD65021.1"/>
    <property type="molecule type" value="Genomic_DNA"/>
</dbReference>
<dbReference type="RefSeq" id="NP_001021974.1">
    <property type="nucleotide sequence ID" value="NM_001026803.2"/>
</dbReference>
<dbReference type="RefSeq" id="NP_001367527.1">
    <property type="nucleotide sequence ID" value="NM_001381435.3"/>
</dbReference>
<dbReference type="SMR" id="Q94986"/>
<dbReference type="BioGRID" id="39313">
    <property type="interactions" value="2"/>
</dbReference>
<dbReference type="FunCoup" id="Q94986">
    <property type="interactions" value="468"/>
</dbReference>
<dbReference type="STRING" id="6239.C18A3.6a.1"/>
<dbReference type="PaxDb" id="6239-C18A3.6a"/>
<dbReference type="EnsemblMetazoa" id="C18A3.6b.1">
    <property type="protein sequence ID" value="C18A3.6b.1"/>
    <property type="gene ID" value="WBGene00004267"/>
</dbReference>
<dbReference type="GeneID" id="173971"/>
<dbReference type="UCSC" id="C18A3.6a">
    <property type="organism name" value="c. elegans"/>
</dbReference>
<dbReference type="AGR" id="WB:WBGene00004267"/>
<dbReference type="WormBase" id="C18A3.6b">
    <property type="protein sequence ID" value="CE20518"/>
    <property type="gene ID" value="WBGene00004267"/>
    <property type="gene designation" value="rab-3"/>
</dbReference>
<dbReference type="eggNOG" id="KOG0093">
    <property type="taxonomic scope" value="Eukaryota"/>
</dbReference>
<dbReference type="HOGENOM" id="CLU_041217_10_1_1"/>
<dbReference type="InParanoid" id="Q94986"/>
<dbReference type="Reactome" id="R-CEL-181429">
    <property type="pathway name" value="Serotonin Neurotransmitter Release Cycle"/>
</dbReference>
<dbReference type="Reactome" id="R-CEL-181430">
    <property type="pathway name" value="Norepinephrine Neurotransmitter Release Cycle"/>
</dbReference>
<dbReference type="Reactome" id="R-CEL-210500">
    <property type="pathway name" value="Glutamate Neurotransmitter Release Cycle"/>
</dbReference>
<dbReference type="Reactome" id="R-CEL-212676">
    <property type="pathway name" value="Dopamine Neurotransmitter Release Cycle"/>
</dbReference>
<dbReference type="Reactome" id="R-CEL-264642">
    <property type="pathway name" value="Acetylcholine Neurotransmitter Release Cycle"/>
</dbReference>
<dbReference type="Reactome" id="R-CEL-6798695">
    <property type="pathway name" value="Neutrophil degranulation"/>
</dbReference>
<dbReference type="Reactome" id="R-CEL-8873719">
    <property type="pathway name" value="RAB geranylgeranylation"/>
</dbReference>
<dbReference type="Reactome" id="R-CEL-8876198">
    <property type="pathway name" value="RAB GEFs exchange GTP for GDP on RABs"/>
</dbReference>
<dbReference type="Reactome" id="R-CEL-888590">
    <property type="pathway name" value="GABA synthesis, release, reuptake and degradation"/>
</dbReference>
<dbReference type="PRO" id="PR:Q94986"/>
<dbReference type="Proteomes" id="UP000001940">
    <property type="component" value="Chromosome II"/>
</dbReference>
<dbReference type="Bgee" id="WBGene00004267">
    <property type="expression patterns" value="Expressed in pharyngeal muscle cell (C elegans) and 3 other cell types or tissues"/>
</dbReference>
<dbReference type="ExpressionAtlas" id="Q94986">
    <property type="expression patterns" value="baseline and differential"/>
</dbReference>
<dbReference type="GO" id="GO:0005768">
    <property type="term" value="C:endosome"/>
    <property type="evidence" value="ECO:0000318"/>
    <property type="project" value="GO_Central"/>
</dbReference>
<dbReference type="GO" id="GO:0043005">
    <property type="term" value="C:neuron projection"/>
    <property type="evidence" value="ECO:0000314"/>
    <property type="project" value="UniProtKB"/>
</dbReference>
<dbReference type="GO" id="GO:0005886">
    <property type="term" value="C:plasma membrane"/>
    <property type="evidence" value="ECO:0000318"/>
    <property type="project" value="GO_Central"/>
</dbReference>
<dbReference type="GO" id="GO:0008021">
    <property type="term" value="C:synaptic vesicle"/>
    <property type="evidence" value="ECO:0000314"/>
    <property type="project" value="WormBase"/>
</dbReference>
<dbReference type="GO" id="GO:0005525">
    <property type="term" value="F:GTP binding"/>
    <property type="evidence" value="ECO:0007669"/>
    <property type="project" value="UniProtKB-KW"/>
</dbReference>
<dbReference type="GO" id="GO:0003924">
    <property type="term" value="F:GTPase activity"/>
    <property type="evidence" value="ECO:0000250"/>
    <property type="project" value="WormBase"/>
</dbReference>
<dbReference type="GO" id="GO:0031489">
    <property type="term" value="F:myosin V binding"/>
    <property type="evidence" value="ECO:0000318"/>
    <property type="project" value="GO_Central"/>
</dbReference>
<dbReference type="GO" id="GO:0006935">
    <property type="term" value="P:chemotaxis"/>
    <property type="evidence" value="ECO:0000315"/>
    <property type="project" value="WormBase"/>
</dbReference>
<dbReference type="GO" id="GO:0006887">
    <property type="term" value="P:exocytosis"/>
    <property type="evidence" value="ECO:0000318"/>
    <property type="project" value="GO_Central"/>
</dbReference>
<dbReference type="GO" id="GO:0007617">
    <property type="term" value="P:mating behavior"/>
    <property type="evidence" value="ECO:0000315"/>
    <property type="project" value="WormBase"/>
</dbReference>
<dbReference type="GO" id="GO:1905488">
    <property type="term" value="P:positive regulation of anterior/posterior axon guidance"/>
    <property type="evidence" value="ECO:0000315"/>
    <property type="project" value="UniProtKB"/>
</dbReference>
<dbReference type="GO" id="GO:0015031">
    <property type="term" value="P:protein transport"/>
    <property type="evidence" value="ECO:0007669"/>
    <property type="project" value="UniProtKB-KW"/>
</dbReference>
<dbReference type="GO" id="GO:0040012">
    <property type="term" value="P:regulation of locomotion"/>
    <property type="evidence" value="ECO:0000315"/>
    <property type="project" value="WormBase"/>
</dbReference>
<dbReference type="GO" id="GO:0043051">
    <property type="term" value="P:regulation of nematode pharyngeal pumping"/>
    <property type="evidence" value="ECO:0000315"/>
    <property type="project" value="WormBase"/>
</dbReference>
<dbReference type="GO" id="GO:0032228">
    <property type="term" value="P:regulation of synaptic transmission, GABAergic"/>
    <property type="evidence" value="ECO:0000315"/>
    <property type="project" value="UniProtKB"/>
</dbReference>
<dbReference type="GO" id="GO:0007271">
    <property type="term" value="P:synaptic transmission, cholinergic"/>
    <property type="evidence" value="ECO:0000315"/>
    <property type="project" value="WormBase"/>
</dbReference>
<dbReference type="GO" id="GO:0007419">
    <property type="term" value="P:ventral cord development"/>
    <property type="evidence" value="ECO:0000315"/>
    <property type="project" value="UniProtKB"/>
</dbReference>
<dbReference type="CDD" id="cd01865">
    <property type="entry name" value="Rab3"/>
    <property type="match status" value="1"/>
</dbReference>
<dbReference type="FunFam" id="3.40.50.300:FF:000206">
    <property type="entry name" value="Ras-related protein Rab-3C"/>
    <property type="match status" value="1"/>
</dbReference>
<dbReference type="Gene3D" id="3.40.50.300">
    <property type="entry name" value="P-loop containing nucleotide triphosphate hydrolases"/>
    <property type="match status" value="1"/>
</dbReference>
<dbReference type="InterPro" id="IPR027417">
    <property type="entry name" value="P-loop_NTPase"/>
</dbReference>
<dbReference type="InterPro" id="IPR037872">
    <property type="entry name" value="Rab3"/>
</dbReference>
<dbReference type="InterPro" id="IPR005225">
    <property type="entry name" value="Small_GTP-bd"/>
</dbReference>
<dbReference type="InterPro" id="IPR001806">
    <property type="entry name" value="Small_GTPase"/>
</dbReference>
<dbReference type="InterPro" id="IPR050305">
    <property type="entry name" value="Small_GTPase_Rab"/>
</dbReference>
<dbReference type="NCBIfam" id="TIGR00231">
    <property type="entry name" value="small_GTP"/>
    <property type="match status" value="1"/>
</dbReference>
<dbReference type="PANTHER" id="PTHR47980">
    <property type="entry name" value="LD44762P"/>
    <property type="match status" value="1"/>
</dbReference>
<dbReference type="Pfam" id="PF00071">
    <property type="entry name" value="Ras"/>
    <property type="match status" value="1"/>
</dbReference>
<dbReference type="PRINTS" id="PR00449">
    <property type="entry name" value="RASTRNSFRMNG"/>
</dbReference>
<dbReference type="SMART" id="SM00175">
    <property type="entry name" value="RAB"/>
    <property type="match status" value="1"/>
</dbReference>
<dbReference type="SMART" id="SM00176">
    <property type="entry name" value="RAN"/>
    <property type="match status" value="1"/>
</dbReference>
<dbReference type="SMART" id="SM00173">
    <property type="entry name" value="RAS"/>
    <property type="match status" value="1"/>
</dbReference>
<dbReference type="SMART" id="SM00174">
    <property type="entry name" value="RHO"/>
    <property type="match status" value="1"/>
</dbReference>
<dbReference type="SUPFAM" id="SSF52540">
    <property type="entry name" value="P-loop containing nucleoside triphosphate hydrolases"/>
    <property type="match status" value="1"/>
</dbReference>
<dbReference type="PROSITE" id="PS51419">
    <property type="entry name" value="RAB"/>
    <property type="match status" value="1"/>
</dbReference>
<name>RAB3_CAEEL</name>
<accession>Q94986</accession>